<dbReference type="EC" id="3.1.3.11" evidence="1"/>
<dbReference type="EMBL" id="CP000112">
    <property type="protein sequence ID" value="ABB38866.1"/>
    <property type="molecule type" value="Genomic_DNA"/>
</dbReference>
<dbReference type="RefSeq" id="WP_011367971.1">
    <property type="nucleotide sequence ID" value="NC_007519.1"/>
</dbReference>
<dbReference type="SMR" id="Q30ZN0"/>
<dbReference type="STRING" id="207559.Dde_2069"/>
<dbReference type="KEGG" id="dde:Dde_2069"/>
<dbReference type="eggNOG" id="COG0158">
    <property type="taxonomic scope" value="Bacteria"/>
</dbReference>
<dbReference type="HOGENOM" id="CLU_039977_2_2_7"/>
<dbReference type="UniPathway" id="UPA00138"/>
<dbReference type="Proteomes" id="UP000002710">
    <property type="component" value="Chromosome"/>
</dbReference>
<dbReference type="GO" id="GO:0005829">
    <property type="term" value="C:cytosol"/>
    <property type="evidence" value="ECO:0007669"/>
    <property type="project" value="TreeGrafter"/>
</dbReference>
<dbReference type="GO" id="GO:0042132">
    <property type="term" value="F:fructose 1,6-bisphosphate 1-phosphatase activity"/>
    <property type="evidence" value="ECO:0007669"/>
    <property type="project" value="UniProtKB-UniRule"/>
</dbReference>
<dbReference type="GO" id="GO:0000287">
    <property type="term" value="F:magnesium ion binding"/>
    <property type="evidence" value="ECO:0007669"/>
    <property type="project" value="UniProtKB-UniRule"/>
</dbReference>
<dbReference type="GO" id="GO:0030388">
    <property type="term" value="P:fructose 1,6-bisphosphate metabolic process"/>
    <property type="evidence" value="ECO:0007669"/>
    <property type="project" value="TreeGrafter"/>
</dbReference>
<dbReference type="GO" id="GO:0006002">
    <property type="term" value="P:fructose 6-phosphate metabolic process"/>
    <property type="evidence" value="ECO:0007669"/>
    <property type="project" value="TreeGrafter"/>
</dbReference>
<dbReference type="GO" id="GO:0006000">
    <property type="term" value="P:fructose metabolic process"/>
    <property type="evidence" value="ECO:0007669"/>
    <property type="project" value="TreeGrafter"/>
</dbReference>
<dbReference type="GO" id="GO:0006094">
    <property type="term" value="P:gluconeogenesis"/>
    <property type="evidence" value="ECO:0007669"/>
    <property type="project" value="UniProtKB-UniRule"/>
</dbReference>
<dbReference type="GO" id="GO:0005986">
    <property type="term" value="P:sucrose biosynthetic process"/>
    <property type="evidence" value="ECO:0007669"/>
    <property type="project" value="TreeGrafter"/>
</dbReference>
<dbReference type="CDD" id="cd00354">
    <property type="entry name" value="FBPase"/>
    <property type="match status" value="1"/>
</dbReference>
<dbReference type="FunFam" id="3.30.540.10:FF:000002">
    <property type="entry name" value="Fructose-1,6-bisphosphatase class 1"/>
    <property type="match status" value="1"/>
</dbReference>
<dbReference type="Gene3D" id="3.40.190.80">
    <property type="match status" value="1"/>
</dbReference>
<dbReference type="Gene3D" id="3.30.540.10">
    <property type="entry name" value="Fructose-1,6-Bisphosphatase, subunit A, domain 1"/>
    <property type="match status" value="1"/>
</dbReference>
<dbReference type="HAMAP" id="MF_01855">
    <property type="entry name" value="FBPase_class1"/>
    <property type="match status" value="1"/>
</dbReference>
<dbReference type="InterPro" id="IPR044015">
    <property type="entry name" value="FBPase_C_dom"/>
</dbReference>
<dbReference type="InterPro" id="IPR000146">
    <property type="entry name" value="FBPase_class-1"/>
</dbReference>
<dbReference type="InterPro" id="IPR033391">
    <property type="entry name" value="FBPase_N"/>
</dbReference>
<dbReference type="InterPro" id="IPR028343">
    <property type="entry name" value="FBPtase"/>
</dbReference>
<dbReference type="NCBIfam" id="NF006778">
    <property type="entry name" value="PRK09293.1-1"/>
    <property type="match status" value="1"/>
</dbReference>
<dbReference type="NCBIfam" id="NF006779">
    <property type="entry name" value="PRK09293.1-3"/>
    <property type="match status" value="1"/>
</dbReference>
<dbReference type="PANTHER" id="PTHR11556">
    <property type="entry name" value="FRUCTOSE-1,6-BISPHOSPHATASE-RELATED"/>
    <property type="match status" value="1"/>
</dbReference>
<dbReference type="PANTHER" id="PTHR11556:SF35">
    <property type="entry name" value="SEDOHEPTULOSE-1,7-BISPHOSPHATASE, CHLOROPLASTIC"/>
    <property type="match status" value="1"/>
</dbReference>
<dbReference type="Pfam" id="PF00316">
    <property type="entry name" value="FBPase"/>
    <property type="match status" value="1"/>
</dbReference>
<dbReference type="Pfam" id="PF18913">
    <property type="entry name" value="FBPase_C"/>
    <property type="match status" value="1"/>
</dbReference>
<dbReference type="PIRSF" id="PIRSF500210">
    <property type="entry name" value="FBPtase"/>
    <property type="match status" value="1"/>
</dbReference>
<dbReference type="PIRSF" id="PIRSF000904">
    <property type="entry name" value="FBPtase_SBPase"/>
    <property type="match status" value="1"/>
</dbReference>
<dbReference type="PRINTS" id="PR00115">
    <property type="entry name" value="F16BPHPHTASE"/>
</dbReference>
<dbReference type="SUPFAM" id="SSF56655">
    <property type="entry name" value="Carbohydrate phosphatase"/>
    <property type="match status" value="1"/>
</dbReference>
<proteinExistence type="inferred from homology"/>
<evidence type="ECO:0000255" key="1">
    <source>
        <dbReference type="HAMAP-Rule" id="MF_01855"/>
    </source>
</evidence>
<sequence length="338" mass="37340">MRQVTVTEHLLLHQTKSPAATGQFTALLYDLILAAKIISKSVNKAGLLDVLGGTGQVNVQGEHVQKLDEYANRVLIHRMERTGVLCAMASEENADLIRVPERFEAGDYILIFDPLDGSSNIDVNINVGTIFSILKRKPGASGSKDVTLGDVLQSGVEQVAAGYFLYGPSTMLVYSSGQGVHGFTLDPSVGEFLLSHPDIRYPEQGRIYSVNESYWHYWDEPTREVVSYFKGPDNPLGKPYSLRYVGSLVADFHRNLFYGGIFMYPMDYRLPEKPQGKLRLMCEASPLAFLAEQAGGRATDGTKRILDIVPGELHQRVPLFIGSAGDVDAVEAIYRRHS</sequence>
<comment type="catalytic activity">
    <reaction evidence="1">
        <text>beta-D-fructose 1,6-bisphosphate + H2O = beta-D-fructose 6-phosphate + phosphate</text>
        <dbReference type="Rhea" id="RHEA:11064"/>
        <dbReference type="ChEBI" id="CHEBI:15377"/>
        <dbReference type="ChEBI" id="CHEBI:32966"/>
        <dbReference type="ChEBI" id="CHEBI:43474"/>
        <dbReference type="ChEBI" id="CHEBI:57634"/>
        <dbReference type="EC" id="3.1.3.11"/>
    </reaction>
</comment>
<comment type="cofactor">
    <cofactor evidence="1">
        <name>Mg(2+)</name>
        <dbReference type="ChEBI" id="CHEBI:18420"/>
    </cofactor>
    <text evidence="1">Binds 2 magnesium ions per subunit.</text>
</comment>
<comment type="pathway">
    <text evidence="1">Carbohydrate biosynthesis; gluconeogenesis.</text>
</comment>
<comment type="subunit">
    <text evidence="1">Homotetramer.</text>
</comment>
<comment type="subcellular location">
    <subcellularLocation>
        <location evidence="1">Cytoplasm</location>
    </subcellularLocation>
</comment>
<comment type="similarity">
    <text evidence="1">Belongs to the FBPase class 1 family.</text>
</comment>
<reference key="1">
    <citation type="journal article" date="2011" name="J. Bacteriol.">
        <title>Complete genome sequence and updated annotation of Desulfovibrio alaskensis G20.</title>
        <authorList>
            <person name="Hauser L.J."/>
            <person name="Land M.L."/>
            <person name="Brown S.D."/>
            <person name="Larimer F."/>
            <person name="Keller K.L."/>
            <person name="Rapp-Giles B.J."/>
            <person name="Price M.N."/>
            <person name="Lin M."/>
            <person name="Bruce D.C."/>
            <person name="Detter J.C."/>
            <person name="Tapia R."/>
            <person name="Han C.S."/>
            <person name="Goodwin L.A."/>
            <person name="Cheng J.F."/>
            <person name="Pitluck S."/>
            <person name="Copeland A."/>
            <person name="Lucas S."/>
            <person name="Nolan M."/>
            <person name="Lapidus A.L."/>
            <person name="Palumbo A.V."/>
            <person name="Wall J.D."/>
        </authorList>
    </citation>
    <scope>NUCLEOTIDE SEQUENCE [LARGE SCALE GENOMIC DNA]</scope>
    <source>
        <strain>ATCC BAA-1058 / DSM 17464 / G20</strain>
    </source>
</reference>
<organism>
    <name type="scientific">Oleidesulfovibrio alaskensis (strain ATCC BAA-1058 / DSM 17464 / G20)</name>
    <name type="common">Desulfovibrio alaskensis</name>
    <dbReference type="NCBI Taxonomy" id="207559"/>
    <lineage>
        <taxon>Bacteria</taxon>
        <taxon>Pseudomonadati</taxon>
        <taxon>Thermodesulfobacteriota</taxon>
        <taxon>Desulfovibrionia</taxon>
        <taxon>Desulfovibrionales</taxon>
        <taxon>Desulfovibrionaceae</taxon>
        <taxon>Oleidesulfovibrio</taxon>
    </lineage>
</organism>
<protein>
    <recommendedName>
        <fullName evidence="1">Fructose-1,6-bisphosphatase class 1</fullName>
        <shortName evidence="1">FBPase class 1</shortName>
        <ecNumber evidence="1">3.1.3.11</ecNumber>
    </recommendedName>
    <alternativeName>
        <fullName evidence="1">D-fructose-1,6-bisphosphate 1-phosphohydrolase class 1</fullName>
    </alternativeName>
</protein>
<keyword id="KW-0119">Carbohydrate metabolism</keyword>
<keyword id="KW-0963">Cytoplasm</keyword>
<keyword id="KW-0378">Hydrolase</keyword>
<keyword id="KW-0460">Magnesium</keyword>
<keyword id="KW-0479">Metal-binding</keyword>
<keyword id="KW-1185">Reference proteome</keyword>
<accession>Q30ZN0</accession>
<gene>
    <name evidence="1" type="primary">fbp</name>
    <name type="ordered locus">Dde_2069</name>
</gene>
<feature type="chain" id="PRO_0000364537" description="Fructose-1,6-bisphosphatase class 1">
    <location>
        <begin position="1"/>
        <end position="338"/>
    </location>
</feature>
<feature type="binding site" evidence="1">
    <location>
        <position position="91"/>
    </location>
    <ligand>
        <name>Mg(2+)</name>
        <dbReference type="ChEBI" id="CHEBI:18420"/>
        <label>1</label>
    </ligand>
</feature>
<feature type="binding site" evidence="1">
    <location>
        <position position="113"/>
    </location>
    <ligand>
        <name>Mg(2+)</name>
        <dbReference type="ChEBI" id="CHEBI:18420"/>
        <label>1</label>
    </ligand>
</feature>
<feature type="binding site" evidence="1">
    <location>
        <position position="113"/>
    </location>
    <ligand>
        <name>Mg(2+)</name>
        <dbReference type="ChEBI" id="CHEBI:18420"/>
        <label>2</label>
    </ligand>
</feature>
<feature type="binding site" evidence="1">
    <location>
        <position position="115"/>
    </location>
    <ligand>
        <name>Mg(2+)</name>
        <dbReference type="ChEBI" id="CHEBI:18420"/>
        <label>1</label>
    </ligand>
</feature>
<feature type="binding site" evidence="1">
    <location>
        <begin position="116"/>
        <end position="119"/>
    </location>
    <ligand>
        <name>substrate</name>
    </ligand>
</feature>
<feature type="binding site" evidence="1">
    <location>
        <position position="116"/>
    </location>
    <ligand>
        <name>Mg(2+)</name>
        <dbReference type="ChEBI" id="CHEBI:18420"/>
        <label>2</label>
    </ligand>
</feature>
<feature type="binding site" evidence="1">
    <location>
        <position position="211"/>
    </location>
    <ligand>
        <name>substrate</name>
    </ligand>
</feature>
<feature type="binding site" evidence="1">
    <location>
        <position position="244"/>
    </location>
    <ligand>
        <name>substrate</name>
    </ligand>
</feature>
<feature type="binding site" evidence="1">
    <location>
        <position position="277"/>
    </location>
    <ligand>
        <name>substrate</name>
    </ligand>
</feature>
<feature type="binding site" evidence="1">
    <location>
        <position position="283"/>
    </location>
    <ligand>
        <name>Mg(2+)</name>
        <dbReference type="ChEBI" id="CHEBI:18420"/>
        <label>2</label>
    </ligand>
</feature>
<name>F16PA_OLEA2</name>